<keyword id="KW-0320">Glycogen biosynthesis</keyword>
<keyword id="KW-0328">Glycosyltransferase</keyword>
<keyword id="KW-0808">Transferase</keyword>
<protein>
    <recommendedName>
        <fullName evidence="1">Glycogen synthase</fullName>
        <ecNumber evidence="1">2.4.1.21</ecNumber>
    </recommendedName>
    <alternativeName>
        <fullName evidence="1">Starch [bacterial glycogen] synthase</fullName>
    </alternativeName>
</protein>
<sequence>MRVVHVASEVFPFSRSGGLGDVLAALPAEQARLGANVTVVSPWYATLSGTPQEVWRGEVPGLGPVGVGELRASGVRFLFVSLPAFERPGLYHPDDVERFCAFGRAVLPVLQALGAVPDVLHGHDWQAGLVVAHAHLAGWRTAFTIHNLQYQGRWNLAEARTWTGLPDWTFSPEGVEFYGDLNLMKAGLVFAEQVTTVSPTYAREITTPQYGEGLEGVLIRLALEGRLSGILNGLDQDRWNPRTDPDIRPYADPAGKAANGSVLRAEFGLDDAPILGVVSRLANQKGIDLLIEALPELVERWNVVVLGGGDPLLTAALHGWAYHPRVAFVSGLNEALAHRIYAGADAFAMPSRFEPCGLSQMIALRYGTLPIVRETGGLVDTVPGDVGFRFADATTEALATACRDARTTLEDVVEWQSRMKRGMELDFSWEGSARHYLALYRHLCSVN</sequence>
<comment type="function">
    <text evidence="1">Synthesizes alpha-1,4-glucan chains using ADP-glucose.</text>
</comment>
<comment type="catalytic activity">
    <reaction evidence="1">
        <text>[(1-&gt;4)-alpha-D-glucosyl](n) + ADP-alpha-D-glucose = [(1-&gt;4)-alpha-D-glucosyl](n+1) + ADP + H(+)</text>
        <dbReference type="Rhea" id="RHEA:18189"/>
        <dbReference type="Rhea" id="RHEA-COMP:9584"/>
        <dbReference type="Rhea" id="RHEA-COMP:9587"/>
        <dbReference type="ChEBI" id="CHEBI:15378"/>
        <dbReference type="ChEBI" id="CHEBI:15444"/>
        <dbReference type="ChEBI" id="CHEBI:57498"/>
        <dbReference type="ChEBI" id="CHEBI:456216"/>
        <dbReference type="EC" id="2.4.1.21"/>
    </reaction>
</comment>
<comment type="pathway">
    <text evidence="1">Glycan biosynthesis; glycogen biosynthesis.</text>
</comment>
<comment type="similarity">
    <text evidence="1">Belongs to the glycosyltransferase 1 family. Bacterial/plant glycogen synthase subfamily.</text>
</comment>
<accession>Q1IWV2</accession>
<gene>
    <name evidence="1" type="primary">glgA</name>
    <name type="ordered locus">Dgeo_1988</name>
</gene>
<organism>
    <name type="scientific">Deinococcus geothermalis (strain DSM 11300 / CIP 105573 / AG-3a)</name>
    <dbReference type="NCBI Taxonomy" id="319795"/>
    <lineage>
        <taxon>Bacteria</taxon>
        <taxon>Thermotogati</taxon>
        <taxon>Deinococcota</taxon>
        <taxon>Deinococci</taxon>
        <taxon>Deinococcales</taxon>
        <taxon>Deinococcaceae</taxon>
        <taxon>Deinococcus</taxon>
    </lineage>
</organism>
<feature type="chain" id="PRO_1000014349" description="Glycogen synthase">
    <location>
        <begin position="1"/>
        <end position="447"/>
    </location>
</feature>
<feature type="binding site" evidence="1">
    <location>
        <position position="15"/>
    </location>
    <ligand>
        <name>ADP-alpha-D-glucose</name>
        <dbReference type="ChEBI" id="CHEBI:57498"/>
    </ligand>
</feature>
<dbReference type="EC" id="2.4.1.21" evidence="1"/>
<dbReference type="EMBL" id="CP000359">
    <property type="protein sequence ID" value="ABF46282.1"/>
    <property type="molecule type" value="Genomic_DNA"/>
</dbReference>
<dbReference type="RefSeq" id="WP_011531109.1">
    <property type="nucleotide sequence ID" value="NC_008025.1"/>
</dbReference>
<dbReference type="SMR" id="Q1IWV2"/>
<dbReference type="STRING" id="319795.Dgeo_1988"/>
<dbReference type="CAZy" id="GT5">
    <property type="family name" value="Glycosyltransferase Family 5"/>
</dbReference>
<dbReference type="KEGG" id="dge:Dgeo_1988"/>
<dbReference type="eggNOG" id="COG0297">
    <property type="taxonomic scope" value="Bacteria"/>
</dbReference>
<dbReference type="HOGENOM" id="CLU_009583_18_2_0"/>
<dbReference type="UniPathway" id="UPA00164"/>
<dbReference type="Proteomes" id="UP000002431">
    <property type="component" value="Chromosome"/>
</dbReference>
<dbReference type="GO" id="GO:0009011">
    <property type="term" value="F:alpha-1,4-glucan glucosyltransferase (ADP-glucose donor) activity"/>
    <property type="evidence" value="ECO:0007669"/>
    <property type="project" value="UniProtKB-UniRule"/>
</dbReference>
<dbReference type="GO" id="GO:0004373">
    <property type="term" value="F:alpha-1,4-glucan glucosyltransferase (UDP-glucose donor) activity"/>
    <property type="evidence" value="ECO:0007669"/>
    <property type="project" value="InterPro"/>
</dbReference>
<dbReference type="GO" id="GO:0005978">
    <property type="term" value="P:glycogen biosynthetic process"/>
    <property type="evidence" value="ECO:0007669"/>
    <property type="project" value="UniProtKB-UniRule"/>
</dbReference>
<dbReference type="CDD" id="cd03791">
    <property type="entry name" value="GT5_Glycogen_synthase_DULL1-like"/>
    <property type="match status" value="1"/>
</dbReference>
<dbReference type="Gene3D" id="3.40.50.2000">
    <property type="entry name" value="Glycogen Phosphorylase B"/>
    <property type="match status" value="2"/>
</dbReference>
<dbReference type="HAMAP" id="MF_00484">
    <property type="entry name" value="Glycogen_synth"/>
    <property type="match status" value="1"/>
</dbReference>
<dbReference type="InterPro" id="IPR011835">
    <property type="entry name" value="GS/SS"/>
</dbReference>
<dbReference type="InterPro" id="IPR013534">
    <property type="entry name" value="Starch_synth_cat_dom"/>
</dbReference>
<dbReference type="NCBIfam" id="TIGR02095">
    <property type="entry name" value="glgA"/>
    <property type="match status" value="1"/>
</dbReference>
<dbReference type="PANTHER" id="PTHR45825:SF11">
    <property type="entry name" value="ALPHA AMYLASE DOMAIN-CONTAINING PROTEIN"/>
    <property type="match status" value="1"/>
</dbReference>
<dbReference type="PANTHER" id="PTHR45825">
    <property type="entry name" value="GRANULE-BOUND STARCH SYNTHASE 1, CHLOROPLASTIC/AMYLOPLASTIC"/>
    <property type="match status" value="1"/>
</dbReference>
<dbReference type="Pfam" id="PF13692">
    <property type="entry name" value="Glyco_trans_1_4"/>
    <property type="match status" value="1"/>
</dbReference>
<dbReference type="Pfam" id="PF08323">
    <property type="entry name" value="Glyco_transf_5"/>
    <property type="match status" value="1"/>
</dbReference>
<dbReference type="SUPFAM" id="SSF53756">
    <property type="entry name" value="UDP-Glycosyltransferase/glycogen phosphorylase"/>
    <property type="match status" value="1"/>
</dbReference>
<reference key="1">
    <citation type="submission" date="2006-04" db="EMBL/GenBank/DDBJ databases">
        <title>Complete sequence of chromosome of Deinococcus geothermalis DSM 11300.</title>
        <authorList>
            <person name="Copeland A."/>
            <person name="Lucas S."/>
            <person name="Lapidus A."/>
            <person name="Barry K."/>
            <person name="Detter J.C."/>
            <person name="Glavina del Rio T."/>
            <person name="Hammon N."/>
            <person name="Israni S."/>
            <person name="Dalin E."/>
            <person name="Tice H."/>
            <person name="Pitluck S."/>
            <person name="Brettin T."/>
            <person name="Bruce D."/>
            <person name="Han C."/>
            <person name="Tapia R."/>
            <person name="Saunders E."/>
            <person name="Gilna P."/>
            <person name="Schmutz J."/>
            <person name="Larimer F."/>
            <person name="Land M."/>
            <person name="Hauser L."/>
            <person name="Kyrpides N."/>
            <person name="Kim E."/>
            <person name="Daly M.J."/>
            <person name="Fredrickson J.K."/>
            <person name="Makarova K.S."/>
            <person name="Gaidamakova E.K."/>
            <person name="Zhai M."/>
            <person name="Richardson P."/>
        </authorList>
    </citation>
    <scope>NUCLEOTIDE SEQUENCE [LARGE SCALE GENOMIC DNA]</scope>
    <source>
        <strain>DSM 11300 / CIP 105573 / AG-3a</strain>
    </source>
</reference>
<evidence type="ECO:0000255" key="1">
    <source>
        <dbReference type="HAMAP-Rule" id="MF_00484"/>
    </source>
</evidence>
<proteinExistence type="inferred from homology"/>
<name>GLGA_DEIGD</name>